<gene>
    <name type="ORF">ATEG_07659</name>
</gene>
<accession>Q0CF75</accession>
<name>AZPB1_ASPTN</name>
<dbReference type="EC" id="2.3.1.-" evidence="9"/>
<dbReference type="EMBL" id="CH476604">
    <property type="protein sequence ID" value="EAU31921.1"/>
    <property type="molecule type" value="Genomic_DNA"/>
</dbReference>
<dbReference type="RefSeq" id="XP_001216280.1">
    <property type="nucleotide sequence ID" value="XM_001216280.1"/>
</dbReference>
<dbReference type="SMR" id="Q0CF75"/>
<dbReference type="STRING" id="341663.Q0CF75"/>
<dbReference type="EnsemblFungi" id="EAU31921">
    <property type="protein sequence ID" value="EAU31921"/>
    <property type="gene ID" value="ATEG_07659"/>
</dbReference>
<dbReference type="GeneID" id="4323012"/>
<dbReference type="VEuPathDB" id="FungiDB:ATEG_07659"/>
<dbReference type="eggNOG" id="KOG1202">
    <property type="taxonomic scope" value="Eukaryota"/>
</dbReference>
<dbReference type="HOGENOM" id="CLU_000022_31_5_1"/>
<dbReference type="OMA" id="STPICVA"/>
<dbReference type="OrthoDB" id="329835at2759"/>
<dbReference type="Proteomes" id="UP000007963">
    <property type="component" value="Unassembled WGS sequence"/>
</dbReference>
<dbReference type="GO" id="GO:0004312">
    <property type="term" value="F:fatty acid synthase activity"/>
    <property type="evidence" value="ECO:0007669"/>
    <property type="project" value="TreeGrafter"/>
</dbReference>
<dbReference type="GO" id="GO:0008168">
    <property type="term" value="F:methyltransferase activity"/>
    <property type="evidence" value="ECO:0007669"/>
    <property type="project" value="UniProtKB-KW"/>
</dbReference>
<dbReference type="GO" id="GO:0016491">
    <property type="term" value="F:oxidoreductase activity"/>
    <property type="evidence" value="ECO:0007669"/>
    <property type="project" value="UniProtKB-KW"/>
</dbReference>
<dbReference type="GO" id="GO:0031177">
    <property type="term" value="F:phosphopantetheine binding"/>
    <property type="evidence" value="ECO:0007669"/>
    <property type="project" value="InterPro"/>
</dbReference>
<dbReference type="GO" id="GO:0006633">
    <property type="term" value="P:fatty acid biosynthetic process"/>
    <property type="evidence" value="ECO:0007669"/>
    <property type="project" value="TreeGrafter"/>
</dbReference>
<dbReference type="GO" id="GO:0032259">
    <property type="term" value="P:methylation"/>
    <property type="evidence" value="ECO:0007669"/>
    <property type="project" value="UniProtKB-KW"/>
</dbReference>
<dbReference type="GO" id="GO:0030639">
    <property type="term" value="P:polyketide biosynthetic process"/>
    <property type="evidence" value="ECO:0007669"/>
    <property type="project" value="UniProtKB-ARBA"/>
</dbReference>
<dbReference type="CDD" id="cd02440">
    <property type="entry name" value="AdoMet_MTases"/>
    <property type="match status" value="1"/>
</dbReference>
<dbReference type="CDD" id="cd05195">
    <property type="entry name" value="enoyl_red"/>
    <property type="match status" value="1"/>
</dbReference>
<dbReference type="CDD" id="cd00833">
    <property type="entry name" value="PKS"/>
    <property type="match status" value="1"/>
</dbReference>
<dbReference type="FunFam" id="3.40.50.720:FF:000209">
    <property type="entry name" value="Polyketide synthase Pks12"/>
    <property type="match status" value="1"/>
</dbReference>
<dbReference type="Gene3D" id="3.40.47.10">
    <property type="match status" value="1"/>
</dbReference>
<dbReference type="Gene3D" id="1.10.1200.10">
    <property type="entry name" value="ACP-like"/>
    <property type="match status" value="1"/>
</dbReference>
<dbReference type="Gene3D" id="3.40.366.10">
    <property type="entry name" value="Malonyl-Coenzyme A Acyl Carrier Protein, domain 2"/>
    <property type="match status" value="2"/>
</dbReference>
<dbReference type="Gene3D" id="3.90.180.10">
    <property type="entry name" value="Medium-chain alcohol dehydrogenases, catalytic domain"/>
    <property type="match status" value="1"/>
</dbReference>
<dbReference type="Gene3D" id="3.40.50.720">
    <property type="entry name" value="NAD(P)-binding Rossmann-like Domain"/>
    <property type="match status" value="3"/>
</dbReference>
<dbReference type="Gene3D" id="3.10.129.110">
    <property type="entry name" value="Polyketide synthase dehydratase"/>
    <property type="match status" value="1"/>
</dbReference>
<dbReference type="Gene3D" id="3.40.50.150">
    <property type="entry name" value="Vaccinia Virus protein VP39"/>
    <property type="match status" value="1"/>
</dbReference>
<dbReference type="InterPro" id="IPR001227">
    <property type="entry name" value="Ac_transferase_dom_sf"/>
</dbReference>
<dbReference type="InterPro" id="IPR036736">
    <property type="entry name" value="ACP-like_sf"/>
</dbReference>
<dbReference type="InterPro" id="IPR014043">
    <property type="entry name" value="Acyl_transferase_dom"/>
</dbReference>
<dbReference type="InterPro" id="IPR016035">
    <property type="entry name" value="Acyl_Trfase/lysoPLipase"/>
</dbReference>
<dbReference type="InterPro" id="IPR013154">
    <property type="entry name" value="ADH-like_N"/>
</dbReference>
<dbReference type="InterPro" id="IPR011032">
    <property type="entry name" value="GroES-like_sf"/>
</dbReference>
<dbReference type="InterPro" id="IPR014031">
    <property type="entry name" value="Ketoacyl_synth_C"/>
</dbReference>
<dbReference type="InterPro" id="IPR014030">
    <property type="entry name" value="Ketoacyl_synth_N"/>
</dbReference>
<dbReference type="InterPro" id="IPR016036">
    <property type="entry name" value="Malonyl_transacylase_ACP-bd"/>
</dbReference>
<dbReference type="InterPro" id="IPR013217">
    <property type="entry name" value="Methyltransf_12"/>
</dbReference>
<dbReference type="InterPro" id="IPR036291">
    <property type="entry name" value="NAD(P)-bd_dom_sf"/>
</dbReference>
<dbReference type="InterPro" id="IPR056501">
    <property type="entry name" value="NAD-bd_HRPKS_sdrA"/>
</dbReference>
<dbReference type="InterPro" id="IPR032821">
    <property type="entry name" value="PKS_assoc"/>
</dbReference>
<dbReference type="InterPro" id="IPR020841">
    <property type="entry name" value="PKS_Beta-ketoAc_synthase_dom"/>
</dbReference>
<dbReference type="InterPro" id="IPR042104">
    <property type="entry name" value="PKS_dehydratase_sf"/>
</dbReference>
<dbReference type="InterPro" id="IPR020807">
    <property type="entry name" value="PKS_DH"/>
</dbReference>
<dbReference type="InterPro" id="IPR049551">
    <property type="entry name" value="PKS_DH_C"/>
</dbReference>
<dbReference type="InterPro" id="IPR049552">
    <property type="entry name" value="PKS_DH_N"/>
</dbReference>
<dbReference type="InterPro" id="IPR020843">
    <property type="entry name" value="PKS_ER"/>
</dbReference>
<dbReference type="InterPro" id="IPR013968">
    <property type="entry name" value="PKS_KR"/>
</dbReference>
<dbReference type="InterPro" id="IPR049900">
    <property type="entry name" value="PKS_mFAS_DH"/>
</dbReference>
<dbReference type="InterPro" id="IPR050091">
    <property type="entry name" value="PKS_NRPS_Biosynth_Enz"/>
</dbReference>
<dbReference type="InterPro" id="IPR020806">
    <property type="entry name" value="PKS_PP-bd"/>
</dbReference>
<dbReference type="InterPro" id="IPR009081">
    <property type="entry name" value="PP-bd_ACP"/>
</dbReference>
<dbReference type="InterPro" id="IPR006162">
    <property type="entry name" value="Ppantetheine_attach_site"/>
</dbReference>
<dbReference type="InterPro" id="IPR029063">
    <property type="entry name" value="SAM-dependent_MTases_sf"/>
</dbReference>
<dbReference type="InterPro" id="IPR016039">
    <property type="entry name" value="Thiolase-like"/>
</dbReference>
<dbReference type="PANTHER" id="PTHR43775:SF29">
    <property type="entry name" value="ASPERFURANONE POLYKETIDE SYNTHASE AFOG-RELATED"/>
    <property type="match status" value="1"/>
</dbReference>
<dbReference type="PANTHER" id="PTHR43775">
    <property type="entry name" value="FATTY ACID SYNTHASE"/>
    <property type="match status" value="1"/>
</dbReference>
<dbReference type="Pfam" id="PF00698">
    <property type="entry name" value="Acyl_transf_1"/>
    <property type="match status" value="1"/>
</dbReference>
<dbReference type="Pfam" id="PF08240">
    <property type="entry name" value="ADH_N"/>
    <property type="match status" value="1"/>
</dbReference>
<dbReference type="Pfam" id="PF13602">
    <property type="entry name" value="ADH_zinc_N_2"/>
    <property type="match status" value="1"/>
</dbReference>
<dbReference type="Pfam" id="PF16197">
    <property type="entry name" value="KAsynt_C_assoc"/>
    <property type="match status" value="1"/>
</dbReference>
<dbReference type="Pfam" id="PF00109">
    <property type="entry name" value="ketoacyl-synt"/>
    <property type="match status" value="2"/>
</dbReference>
<dbReference type="Pfam" id="PF02801">
    <property type="entry name" value="Ketoacyl-synt_C"/>
    <property type="match status" value="1"/>
</dbReference>
<dbReference type="Pfam" id="PF08659">
    <property type="entry name" value="KR"/>
    <property type="match status" value="1"/>
</dbReference>
<dbReference type="Pfam" id="PF08242">
    <property type="entry name" value="Methyltransf_12"/>
    <property type="match status" value="1"/>
</dbReference>
<dbReference type="Pfam" id="PF23114">
    <property type="entry name" value="NAD-bd_HRPKS_sdrA"/>
    <property type="match status" value="1"/>
</dbReference>
<dbReference type="Pfam" id="PF21089">
    <property type="entry name" value="PKS_DH_N"/>
    <property type="match status" value="1"/>
</dbReference>
<dbReference type="Pfam" id="PF00550">
    <property type="entry name" value="PP-binding"/>
    <property type="match status" value="1"/>
</dbReference>
<dbReference type="Pfam" id="PF14765">
    <property type="entry name" value="PS-DH"/>
    <property type="match status" value="1"/>
</dbReference>
<dbReference type="SMART" id="SM00827">
    <property type="entry name" value="PKS_AT"/>
    <property type="match status" value="1"/>
</dbReference>
<dbReference type="SMART" id="SM00826">
    <property type="entry name" value="PKS_DH"/>
    <property type="match status" value="1"/>
</dbReference>
<dbReference type="SMART" id="SM00829">
    <property type="entry name" value="PKS_ER"/>
    <property type="match status" value="1"/>
</dbReference>
<dbReference type="SMART" id="SM00822">
    <property type="entry name" value="PKS_KR"/>
    <property type="match status" value="1"/>
</dbReference>
<dbReference type="SMART" id="SM00825">
    <property type="entry name" value="PKS_KS"/>
    <property type="match status" value="1"/>
</dbReference>
<dbReference type="SMART" id="SM00823">
    <property type="entry name" value="PKS_PP"/>
    <property type="match status" value="1"/>
</dbReference>
<dbReference type="SUPFAM" id="SSF47336">
    <property type="entry name" value="ACP-like"/>
    <property type="match status" value="1"/>
</dbReference>
<dbReference type="SUPFAM" id="SSF52151">
    <property type="entry name" value="FabD/lysophospholipase-like"/>
    <property type="match status" value="1"/>
</dbReference>
<dbReference type="SUPFAM" id="SSF50129">
    <property type="entry name" value="GroES-like"/>
    <property type="match status" value="1"/>
</dbReference>
<dbReference type="SUPFAM" id="SSF51735">
    <property type="entry name" value="NAD(P)-binding Rossmann-fold domains"/>
    <property type="match status" value="3"/>
</dbReference>
<dbReference type="SUPFAM" id="SSF55048">
    <property type="entry name" value="Probable ACP-binding domain of malonyl-CoA ACP transacylase"/>
    <property type="match status" value="1"/>
</dbReference>
<dbReference type="SUPFAM" id="SSF53335">
    <property type="entry name" value="S-adenosyl-L-methionine-dependent methyltransferases"/>
    <property type="match status" value="1"/>
</dbReference>
<dbReference type="SUPFAM" id="SSF53901">
    <property type="entry name" value="Thiolase-like"/>
    <property type="match status" value="1"/>
</dbReference>
<dbReference type="PROSITE" id="PS50075">
    <property type="entry name" value="CARRIER"/>
    <property type="match status" value="1"/>
</dbReference>
<dbReference type="PROSITE" id="PS52004">
    <property type="entry name" value="KS3_2"/>
    <property type="match status" value="1"/>
</dbReference>
<dbReference type="PROSITE" id="PS00012">
    <property type="entry name" value="PHOSPHOPANTETHEINE"/>
    <property type="match status" value="1"/>
</dbReference>
<dbReference type="PROSITE" id="PS52019">
    <property type="entry name" value="PKS_MFAS_DH"/>
    <property type="match status" value="1"/>
</dbReference>
<sequence length="2611" mass="282647">MGSTHNEWESEPIAIIGLSCKFAGDASNPEKLWDMLAEGRNAWSEVPSSRFNPKAVYHPDSEKLSTTHVKGAHFIDEDIGLFDAAFFNFSAETAAIAGSNTSVYAGVFTHDYHEGLIRDEDRLPRFLPIGTLSAMSSNRISHFFDLKGASMTVDTGCSTALVALHQAVLGLRTGEADMSIVSGCNLMLSPDMFKVFSSLGMLSPDGKSYAFDSRANGYGRGEGVASIVIKRLKDAVEAGDPVRAVIRESFLNQDGKTETITSPSQAAQEALIRECYRRAGLSPHDTQYFEAHGTGTPTGDPIEARSIAAVFGQDRSEPLRIGSVKTNIGHTEAASGLAGLIKVVLAMEKGQIPPSVNFQKPNPKLQLDEWRLKVATELEPWPAASDQPWRASVNNFGYGGTNSHVIVEGVGSLASLLPRKQLTNGIHHAVDSKADVKTQSKVLVFSGRDEQACQRMVSNTKEYLERRKLQDPGMTADKINELMQNLAWTLTQHRSRFAWVSAHAVKYSDNLDQVIQGLDAPQFKPVKVATTPARIGMVFTGQGAQWHAMARELIDPYPVFRSSLYEAERYLRDIGADWSLTAELMRDAATTRVNDTGLSIPICVAVQIALVRLLRSWGIVPSAVTSHSSGEIAAAYTVGALTLRQAMAVAYYRAAMAADKTLRGADGGPKGAMVAVGVGKEAAEGYLHKLPSTSGKAVVACINSPSSITIAGDEAAVQEVEALATADGVFARRLKVDTGYHSHHMDPVAEPYRQALRTALAQKDSDEGQALPDKVDGEPWAGAYRAALHEALPDAIEKGSLDSIIFSSPVTGGRVTRAEVLADPEHWVRSLVQPVRFVEAFTDMTVGGNGEQERSNVDVILEVGPHTALGGPIKEILSLPEFEGITLPYMGCLVRKEDARDCMLAAAVNLLGKGQPANLTRINFPWGLQGPAKPRVLTDMPSYPWNHSNRHWNESRRNQAYRQRSQEPHDLLGVLVPGTNPDAASWRHIVRLSEAPWLRDHVVQGNILYPGAGFVCLAIEAIKMQTAMASATPDAGELAGFKLRDVEIHQALVIADTADGVEVQTILRPVDGKTIGARGWKQFEIWSVTADSEWTEHARGLITVQMAADTAKTNATSHSSASFLDESGYTRRIDPQDMFASLRAKGLNHGPMFQNTVSILQDGRAKEPRCVVTIKVADTSSPKDKGRDLQNVLHPTTLDSIVLSSYAAVPSADPSNDDSARVPRSIRKLWVSNRISNTPGHVFTCNVKMPHHDAQSYEANVSVLDQDGTSEVEPLLEMQGLVCQSLGRSAPGEDKEPWNKELCANVEWGPDLALSLGLPGAQDAIDKRLNTLRDEVAGTDSRSIEVQTVLRRVCVYFSHDALEALTETDVANLASHHVKFYKWMKDTVSLAASRRWSAESDTWTSDPPAVRQHYIDLAAKQSVDGELICHLGPLLLPILRGERAPLEVMMEDRLLYKYYANAYRLEPAFGQLKSLLAAVLHKNPRARVLEIGAGTGAATRHALKTLGTDEDGGPRCESWHFTDISSGFFEAARTEFSAWGNLLEFDRLDIEQSPEAQGFKLASYDVVVACQVLHATKSMARTMSNVRSLMKPGATLLLMETTQDQIDLQFIFGLLPGWWLSEEPERHSSPSLSIGMWDRVLKGAGFTGVEIDLRDVNVDAESDLYGISNILSTAASPSPELDSSRVVIVTSDKAPPQSGWLETLRKSIAQVAGNRVLPDVLALESPGLTAATYTGKLCVFVGELDKPVLAGLDAADLQGLKTMALGCKGLLWITRGGAVECTDPESALASGFVRVLRTEYLGRRFLTLDLDPRTAEMDTAAIVQVLKSCLAASDAPAPIESEFAVRDGLILVPRLYKDVVWNALLEPEVPDWASPETIPEGPLFQPKRPLRLEVGIPGLLDTLAFGDDDGVAADLPDDMVEIEPRAYGLNFRDVMVAMGQLRERVMGLECAGIITRVGSEAAAQGFAVGDHVMALLLGPFSSRPRITWHGVINMPQGMSFSDAASIPMIFTTAYVALVQVARLRHGQSVLIHAAAGGVGQAAVMLAQDYLGAEVYATVGSQEKRDLLTREYGIPPERIFNSRDASFAPAVLAATGGRGVDAVLNSLGGSLLQASFEVLAPFGNFVEIGKRDLEQNSLLEMATFTRAVSFTSLDMMTLLRQRGPEAHRILSELARLAGQKIIKPVHPVTVYPMGQVDKAFRLLQTGKHLGKLVLSTEPEEQVKVLPRPATPKLRSDASYLLVGGVGGLGRSLANWMVDHGARNLILLSRSAGKQDTSAFVAQLREAGSRVAAISCDVSDKEDLAKALRICEHDLHFPPVRGVIQGAMVLQDSILEQMTIDDWQAAIRPKVAGTWNLHERFSQRGSLDFFVMLSSLSCILGWASQASYAAGGTYQDALARWRCASGLPAVSLDMGVIKDVGYVAESRTVSDRLRKVGQSLRLSEESVLQTLATAVLHPFGRPQVLLGLNSGPGSHWDPASDSQMGRDARFMPLRYRKPAASRAQAQQAGGDSDSEPLSAKLRTAESSDAAARCVGDAIATKLADIFMVPVDDIDLSKPPSAYGVDSLVAVELRNMLVLQAACDVSIFSILQSASLAALALDVVAKSAHVEIAA</sequence>
<reference key="1">
    <citation type="submission" date="2005-09" db="EMBL/GenBank/DDBJ databases">
        <title>Annotation of the Aspergillus terreus NIH2624 genome.</title>
        <authorList>
            <person name="Birren B.W."/>
            <person name="Lander E.S."/>
            <person name="Galagan J.E."/>
            <person name="Nusbaum C."/>
            <person name="Devon K."/>
            <person name="Henn M."/>
            <person name="Ma L.-J."/>
            <person name="Jaffe D.B."/>
            <person name="Butler J."/>
            <person name="Alvarez P."/>
            <person name="Gnerre S."/>
            <person name="Grabherr M."/>
            <person name="Kleber M."/>
            <person name="Mauceli E.W."/>
            <person name="Brockman W."/>
            <person name="Rounsley S."/>
            <person name="Young S.K."/>
            <person name="LaButti K."/>
            <person name="Pushparaj V."/>
            <person name="DeCaprio D."/>
            <person name="Crawford M."/>
            <person name="Koehrsen M."/>
            <person name="Engels R."/>
            <person name="Montgomery P."/>
            <person name="Pearson M."/>
            <person name="Howarth C."/>
            <person name="Larson L."/>
            <person name="Luoma S."/>
            <person name="White J."/>
            <person name="Alvarado L."/>
            <person name="Kodira C.D."/>
            <person name="Zeng Q."/>
            <person name="Oleary S."/>
            <person name="Yandava C."/>
            <person name="Denning D.W."/>
            <person name="Nierman W.C."/>
            <person name="Milne T."/>
            <person name="Madden K."/>
        </authorList>
    </citation>
    <scope>NUCLEOTIDE SEQUENCE [LARGE SCALE GENOMIC DNA]</scope>
    <source>
        <strain>NIH 2624 / FGSC A1156</strain>
    </source>
</reference>
<reference key="2">
    <citation type="journal article" date="2013" name="J. Am. Chem. Soc.">
        <title>An efficient system for heterologous expression of secondary metabolite genes in Aspergillus nidulans.</title>
        <authorList>
            <person name="Chiang Y.M."/>
            <person name="Oakley C.E."/>
            <person name="Ahuja M."/>
            <person name="Entwistle R."/>
            <person name="Schultz A."/>
            <person name="Chang S.L."/>
            <person name="Sung C.T."/>
            <person name="Wang C.C."/>
            <person name="Oakley B.R."/>
        </authorList>
    </citation>
    <scope>FUNCTION</scope>
    <scope>CATALYTIC ACTIVITY</scope>
    <scope>PATHWAY</scope>
</reference>
<reference key="3">
    <citation type="journal article" date="2014" name="Chem. Biol.">
        <title>Aryl-aldehyde formation in fungal polyketides: discovery and characterization of a distinct biosynthetic mechanism.</title>
        <authorList>
            <person name="Wang M."/>
            <person name="Beissner M."/>
            <person name="Zhao H."/>
        </authorList>
    </citation>
    <scope>FUNCTION</scope>
</reference>
<reference key="4">
    <citation type="journal article" date="2020" name="Angew. Chem. Int. Ed.">
        <title>Collaborative biosynthesis of a class of bioactive azaphilones by two separate gene clusters containing four PKS/NRPSs with transcriptional cosstalk in fungi.</title>
        <authorList>
            <person name="Huang X."/>
            <person name="Zhang W."/>
            <person name="Tang S."/>
            <person name="Wei S."/>
            <person name="Lu X."/>
        </authorList>
    </citation>
    <scope>FUNCTION</scope>
    <scope>INDUCTION</scope>
    <scope>DISRUPTION PHENOTYPE</scope>
    <scope>PATHWAY</scope>
    <scope>BIOTECHNOLOGY</scope>
</reference>
<protein>
    <recommendedName>
        <fullName evidence="8">Highly reducing polyketide synthase ATEG_07659</fullName>
        <shortName evidence="8">HR-PKS</shortName>
        <ecNumber evidence="9">2.3.1.-</ecNumber>
    </recommendedName>
    <alternativeName>
        <fullName evidence="8">Azasperpyranone A biosynthesis cluster B protein ATEG_07659</fullName>
    </alternativeName>
</protein>
<proteinExistence type="evidence at protein level"/>
<comment type="function">
    <text evidence="6 7 9">Highly reducing polyketide synthase; part of the cluster B that mediates the biosynthesis of azasperpyranones, members of the azaphilone family that exhibit anti-cancer activities (PubMed:31908094). Azasperpyranones are synthesized by 2 clusters, A and B (PubMed:31908094). Cluster A is responsible for the production of the polyhydric phenol moiety while the azaphilonoid scaffold is produced by the cluster B (PubMed:31908094). The non-reducing polyketide synthase ATEG_03629 produces 5-methyl orsellinic acid, which is then reduced to 5-methyl orsellinic aldehyde by the NRPS-like protein ATEG_03630 (PubMed:24412543). 5-methyl orsellinic aldehyde is then first hydroxylated by the FAD-dependent monooxygenase ATEG_03635 and subsequently hydroxylated by the cytochrome P450 monooxygenase ATEG_03631 to produce the unstable polyhydric phenol precursor of azasperpyranones (PubMed:31908094). On the other hand, the polyketide synthase ATEG_07659 is responsible for producing the 3,5-dimethyloctadienone moiety from acetyl-CoA, three malonyl-CoA, and two S-adenosyl methionines (SAM) (Probable). The 3,5-dimethyloctadienone moiety is then loaded onto the SAT domain of ATEG_07661 and extended with four malonyl-CoA and one SAM, which leads to the formation of 2,4-dihydroxy-6-(5,7-dimethyl-2-oxo-trans-3-trans-5-nonadienyl)-3-methylbenzaldehyde (compound 8) after reductive release and aldol condensation (Probable). The FAD-dependent monooxygenase ATEG_07662 is the next enzyme in the biosynthesis sequence and hydroxylates the side chain at the benzylic position of compound 8 (Probable). In Aspergillus nidulans, afoF, the ortholog of the FAD-dependent oxygenase ATEG_07660, is the key enzyme for the biosynthesis of asperfuranone by catalyzing the hydroxylation at C-8 of to prevent the formation of a six-membered ring hemiacetal intermediate and thus facilitating the formation of a five-membered ring to produce asperfuranone (Probable). In Aspergillus terreus, ATEG_07660 is probably not functional, which leads to the formation of the six-membered ring hemiacetal intermediate presperpyranone instead of asperfuranone (Probable). Finally, ATEG_03636 is involved in the condensation of the polyhydric phenol moiety produced by cluster A and the perasperpyranone precursor produced by cluster B, to yield azasperpyranone A (Probable). Further modifications of azasperpyranone A result in the production of derivatives, including azasperpyranone B to F (PubMed:31908094).</text>
</comment>
<comment type="pathway">
    <text evidence="7">Secondary metabolite biosynthesis.</text>
</comment>
<comment type="induction">
    <text evidence="7">Expression is induced by the azasperpyranone cluster A-specific transcription factor ATEG_07666 which is itself regulated by the azasperpyranone transcriptional regulator ATEG_07667.</text>
</comment>
<comment type="domain">
    <text evidence="9">Multidomain protein; including a ketosynthase (KS) that catalyzes repeated decarboxylative condensation to elongate the polyketide backbone; a malonyl-CoA:ACP transacylase (MAT) that selects and transfers the extender unit malonyl-CoA; a dehydratase (DH) domain that reduces hydroxyl groups to enoyl groups; a methyltransferase (CMeT) domain responsible for the incorporation of methyl groups; an enoylreductase (ER) domain that reduces enoyl groups to alkyl group; a ketoreductase (KR) domain that catalyzes beta-ketoreduction steps; and an acyl-carrier protein (ACP) that serves as the tether of the growing and completed polyketide via its phosphopantetheinyl arm.</text>
</comment>
<comment type="disruption phenotype">
    <text evidence="7">Abolishes the production of azasperpyranone A(AZA-A).</text>
</comment>
<comment type="biotechnology">
    <text evidence="7">Azasperpyranones display potential anti-cancer activities (PubMed:31908094). Azasperpyranones A, C, D, and F exhibit potent growth-inhibitory activity against the A549, HepG2, HCT-116, and HL-60 cell lines, with IC(50) values of 2.39-14.42 mm, respectively (PubMed:31908094). Moreover, azasperpyranone D significantly inhibits HCT-116 xenograft tumor growth in BALB/c-nu mice (PubMed:31908094). In addition, azasperpyranones A and C can bind with four kinds of therapeutic targets for cancer, eEF2K, FGFR, survivin, and TNF-a (PubMed:31908094).</text>
</comment>
<feature type="chain" id="PRO_0000450084" description="Highly reducing polyketide synthase ATEG_07659">
    <location>
        <begin position="1"/>
        <end position="2611"/>
    </location>
</feature>
<feature type="domain" description="Ketosynthase family 3 (KS3)" evidence="3">
    <location>
        <begin position="10"/>
        <end position="409"/>
    </location>
</feature>
<feature type="domain" description="PKS/mFAS DH" evidence="4">
    <location>
        <begin position="969"/>
        <end position="1292"/>
    </location>
</feature>
<feature type="domain" description="Carrier" evidence="2">
    <location>
        <begin position="2527"/>
        <end position="2604"/>
    </location>
</feature>
<feature type="region of interest" description="Malonyl-CoA:ACP transacylase (MAT) domain" evidence="1">
    <location>
        <begin position="537"/>
        <end position="844"/>
    </location>
</feature>
<feature type="region of interest" description="N-terminal hotdog fold" evidence="4">
    <location>
        <begin position="969"/>
        <end position="1109"/>
    </location>
</feature>
<feature type="region of interest" description="Dehydratase (DH) domain" evidence="1">
    <location>
        <begin position="970"/>
        <end position="1289"/>
    </location>
</feature>
<feature type="region of interest" description="C-terminal hotdog fold" evidence="4">
    <location>
        <begin position="1128"/>
        <end position="1292"/>
    </location>
</feature>
<feature type="region of interest" description="Methyltransferase (CMet) domain" evidence="1">
    <location>
        <begin position="1469"/>
        <end position="1602"/>
    </location>
</feature>
<feature type="region of interest" description="Enoyl reductase (ER) domain" evidence="1">
    <location>
        <begin position="1898"/>
        <end position="2213"/>
    </location>
</feature>
<feature type="region of interest" description="Ketoreductase (KR) domain" evidence="1">
    <location>
        <begin position="2236"/>
        <end position="2416"/>
    </location>
</feature>
<feature type="region of interest" description="Disordered" evidence="5">
    <location>
        <begin position="2499"/>
        <end position="2520"/>
    </location>
</feature>
<feature type="compositionally biased region" description="Low complexity" evidence="5">
    <location>
        <begin position="2499"/>
        <end position="2509"/>
    </location>
</feature>
<feature type="active site" description="For beta-ketoacyl synthase activity" evidence="3">
    <location>
        <position position="157"/>
    </location>
</feature>
<feature type="active site" description="For beta-ketoacyl synthase activity" evidence="3">
    <location>
        <position position="292"/>
    </location>
</feature>
<feature type="active site" description="For beta-ketoacyl synthase activity" evidence="3">
    <location>
        <position position="330"/>
    </location>
</feature>
<feature type="active site" description="Proton acceptor; for dehydratase activity" evidence="4">
    <location>
        <position position="1001"/>
    </location>
</feature>
<feature type="active site" description="Proton donor; for dehydratase activity" evidence="4">
    <location>
        <position position="1199"/>
    </location>
</feature>
<feature type="modified residue" description="O-(pantetheine 4'-phosphoryl)serine" evidence="2">
    <location>
        <position position="2564"/>
    </location>
</feature>
<evidence type="ECO:0000255" key="1"/>
<evidence type="ECO:0000255" key="2">
    <source>
        <dbReference type="PROSITE-ProRule" id="PRU00258"/>
    </source>
</evidence>
<evidence type="ECO:0000255" key="3">
    <source>
        <dbReference type="PROSITE-ProRule" id="PRU01348"/>
    </source>
</evidence>
<evidence type="ECO:0000255" key="4">
    <source>
        <dbReference type="PROSITE-ProRule" id="PRU01363"/>
    </source>
</evidence>
<evidence type="ECO:0000256" key="5">
    <source>
        <dbReference type="SAM" id="MobiDB-lite"/>
    </source>
</evidence>
<evidence type="ECO:0000269" key="6">
    <source>
    </source>
</evidence>
<evidence type="ECO:0000269" key="7">
    <source>
    </source>
</evidence>
<evidence type="ECO:0000303" key="8">
    <source>
    </source>
</evidence>
<evidence type="ECO:0000305" key="9">
    <source>
    </source>
</evidence>
<keyword id="KW-0012">Acyltransferase</keyword>
<keyword id="KW-0489">Methyltransferase</keyword>
<keyword id="KW-0511">Multifunctional enzyme</keyword>
<keyword id="KW-0521">NADP</keyword>
<keyword id="KW-0560">Oxidoreductase</keyword>
<keyword id="KW-0596">Phosphopantetheine</keyword>
<keyword id="KW-0597">Phosphoprotein</keyword>
<keyword id="KW-1185">Reference proteome</keyword>
<keyword id="KW-0808">Transferase</keyword>
<organism>
    <name type="scientific">Aspergillus terreus (strain NIH 2624 / FGSC A1156)</name>
    <dbReference type="NCBI Taxonomy" id="341663"/>
    <lineage>
        <taxon>Eukaryota</taxon>
        <taxon>Fungi</taxon>
        <taxon>Dikarya</taxon>
        <taxon>Ascomycota</taxon>
        <taxon>Pezizomycotina</taxon>
        <taxon>Eurotiomycetes</taxon>
        <taxon>Eurotiomycetidae</taxon>
        <taxon>Eurotiales</taxon>
        <taxon>Aspergillaceae</taxon>
        <taxon>Aspergillus</taxon>
        <taxon>Aspergillus subgen. Circumdati</taxon>
    </lineage>
</organism>